<proteinExistence type="inferred from homology"/>
<sequence>MPKSVIIPAGSSAPLAPFVPGTLADGVVYVSGTLAFDQHNNVLFADDPKAQTRHVLETIRKVIETAGGTMADVTFNSIFITDWKNYAAINEIYAEFFPGDKPARFCIQCGLVKPDALVEIATIAHIAK</sequence>
<protein>
    <recommendedName>
        <fullName evidence="1">3-aminoacrylate deaminase RutC</fullName>
        <shortName evidence="1">3-AA deaminase</shortName>
        <ecNumber evidence="1">3.5.-.-</ecNumber>
    </recommendedName>
</protein>
<keyword id="KW-0378">Hydrolase</keyword>
<accession>B1IV87</accession>
<dbReference type="EC" id="3.5.-.-" evidence="1"/>
<dbReference type="EMBL" id="CP000946">
    <property type="protein sequence ID" value="ACA78216.1"/>
    <property type="molecule type" value="Genomic_DNA"/>
</dbReference>
<dbReference type="RefSeq" id="WP_001126780.1">
    <property type="nucleotide sequence ID" value="NZ_MTFT01000050.1"/>
</dbReference>
<dbReference type="SMR" id="B1IV87"/>
<dbReference type="GeneID" id="75171086"/>
<dbReference type="KEGG" id="ecl:EcolC_2585"/>
<dbReference type="HOGENOM" id="CLU_100715_7_3_6"/>
<dbReference type="GO" id="GO:0005829">
    <property type="term" value="C:cytosol"/>
    <property type="evidence" value="ECO:0007669"/>
    <property type="project" value="TreeGrafter"/>
</dbReference>
<dbReference type="GO" id="GO:0019239">
    <property type="term" value="F:deaminase activity"/>
    <property type="evidence" value="ECO:0007669"/>
    <property type="project" value="TreeGrafter"/>
</dbReference>
<dbReference type="GO" id="GO:0019740">
    <property type="term" value="P:nitrogen utilization"/>
    <property type="evidence" value="ECO:0007669"/>
    <property type="project" value="UniProtKB-UniRule"/>
</dbReference>
<dbReference type="GO" id="GO:0006212">
    <property type="term" value="P:uracil catabolic process"/>
    <property type="evidence" value="ECO:0007669"/>
    <property type="project" value="UniProtKB-UniRule"/>
</dbReference>
<dbReference type="CDD" id="cd00448">
    <property type="entry name" value="YjgF_YER057c_UK114_family"/>
    <property type="match status" value="1"/>
</dbReference>
<dbReference type="FunFam" id="3.30.1330.40:FF:000003">
    <property type="entry name" value="Putative aminoacrylate peracid reductase RutC"/>
    <property type="match status" value="1"/>
</dbReference>
<dbReference type="Gene3D" id="3.30.1330.40">
    <property type="entry name" value="RutC-like"/>
    <property type="match status" value="1"/>
</dbReference>
<dbReference type="HAMAP" id="MF_00831">
    <property type="entry name" value="RutC"/>
    <property type="match status" value="1"/>
</dbReference>
<dbReference type="InterPro" id="IPR019897">
    <property type="entry name" value="RidA_CS"/>
</dbReference>
<dbReference type="InterPro" id="IPR019898">
    <property type="entry name" value="RutC"/>
</dbReference>
<dbReference type="InterPro" id="IPR035959">
    <property type="entry name" value="RutC-like_sf"/>
</dbReference>
<dbReference type="InterPro" id="IPR006175">
    <property type="entry name" value="YjgF/YER057c/UK114"/>
</dbReference>
<dbReference type="NCBIfam" id="TIGR03610">
    <property type="entry name" value="RutC"/>
    <property type="match status" value="1"/>
</dbReference>
<dbReference type="PANTHER" id="PTHR11803">
    <property type="entry name" value="2-IMINOBUTANOATE/2-IMINOPROPANOATE DEAMINASE RIDA"/>
    <property type="match status" value="1"/>
</dbReference>
<dbReference type="PANTHER" id="PTHR11803:SF58">
    <property type="entry name" value="PROTEIN HMF1-RELATED"/>
    <property type="match status" value="1"/>
</dbReference>
<dbReference type="Pfam" id="PF01042">
    <property type="entry name" value="Ribonuc_L-PSP"/>
    <property type="match status" value="1"/>
</dbReference>
<dbReference type="SUPFAM" id="SSF55298">
    <property type="entry name" value="YjgF-like"/>
    <property type="match status" value="1"/>
</dbReference>
<dbReference type="PROSITE" id="PS01094">
    <property type="entry name" value="UPF0076"/>
    <property type="match status" value="1"/>
</dbReference>
<evidence type="ECO:0000255" key="1">
    <source>
        <dbReference type="HAMAP-Rule" id="MF_00831"/>
    </source>
</evidence>
<feature type="chain" id="PRO_0000402723" description="3-aminoacrylate deaminase RutC">
    <location>
        <begin position="1"/>
        <end position="128"/>
    </location>
</feature>
<name>RUTC_ECOLC</name>
<reference key="1">
    <citation type="submission" date="2008-02" db="EMBL/GenBank/DDBJ databases">
        <title>Complete sequence of Escherichia coli C str. ATCC 8739.</title>
        <authorList>
            <person name="Copeland A."/>
            <person name="Lucas S."/>
            <person name="Lapidus A."/>
            <person name="Glavina del Rio T."/>
            <person name="Dalin E."/>
            <person name="Tice H."/>
            <person name="Bruce D."/>
            <person name="Goodwin L."/>
            <person name="Pitluck S."/>
            <person name="Kiss H."/>
            <person name="Brettin T."/>
            <person name="Detter J.C."/>
            <person name="Han C."/>
            <person name="Kuske C.R."/>
            <person name="Schmutz J."/>
            <person name="Larimer F."/>
            <person name="Land M."/>
            <person name="Hauser L."/>
            <person name="Kyrpides N."/>
            <person name="Mikhailova N."/>
            <person name="Ingram L."/>
            <person name="Richardson P."/>
        </authorList>
    </citation>
    <scope>NUCLEOTIDE SEQUENCE [LARGE SCALE GENOMIC DNA]</scope>
    <source>
        <strain>ATCC 8739 / DSM 1576 / NBRC 3972 / NCIMB 8545 / WDCM 00012 / Crooks</strain>
    </source>
</reference>
<organism>
    <name type="scientific">Escherichia coli (strain ATCC 8739 / DSM 1576 / NBRC 3972 / NCIMB 8545 / WDCM 00012 / Crooks)</name>
    <dbReference type="NCBI Taxonomy" id="481805"/>
    <lineage>
        <taxon>Bacteria</taxon>
        <taxon>Pseudomonadati</taxon>
        <taxon>Pseudomonadota</taxon>
        <taxon>Gammaproteobacteria</taxon>
        <taxon>Enterobacterales</taxon>
        <taxon>Enterobacteriaceae</taxon>
        <taxon>Escherichia</taxon>
    </lineage>
</organism>
<comment type="function">
    <text evidence="1">Involved in pyrimidine catabolism. Catalyzes the deamination of 3-aminoacrylate to malonic semialdehyde, a reaction that can also occur spontaneously. RutC may facilitate the reaction and modulate the metabolic fitness, rather than catalyzing essential functions.</text>
</comment>
<comment type="catalytic activity">
    <reaction evidence="1">
        <text>(Z)-3-aminoacrylate + H2O + H(+) = 3-oxopropanoate + NH4(+)</text>
        <dbReference type="Rhea" id="RHEA:34947"/>
        <dbReference type="ChEBI" id="CHEBI:15377"/>
        <dbReference type="ChEBI" id="CHEBI:15378"/>
        <dbReference type="ChEBI" id="CHEBI:28938"/>
        <dbReference type="ChEBI" id="CHEBI:33190"/>
        <dbReference type="ChEBI" id="CHEBI:59894"/>
    </reaction>
</comment>
<comment type="subunit">
    <text evidence="1">Homotrimer.</text>
</comment>
<comment type="similarity">
    <text evidence="1">Belongs to the RutC family.</text>
</comment>
<gene>
    <name evidence="1" type="primary">rutC</name>
    <name type="ordered locus">EcolC_2585</name>
</gene>